<organism>
    <name type="scientific">Nanger granti</name>
    <name type="common">Grant's gazelle</name>
    <name type="synonym">Gazella granti</name>
    <dbReference type="NCBI Taxonomy" id="27591"/>
    <lineage>
        <taxon>Eukaryota</taxon>
        <taxon>Metazoa</taxon>
        <taxon>Chordata</taxon>
        <taxon>Craniata</taxon>
        <taxon>Vertebrata</taxon>
        <taxon>Euteleostomi</taxon>
        <taxon>Mammalia</taxon>
        <taxon>Eutheria</taxon>
        <taxon>Laurasiatheria</taxon>
        <taxon>Artiodactyla</taxon>
        <taxon>Ruminantia</taxon>
        <taxon>Pecora</taxon>
        <taxon>Bovidae</taxon>
        <taxon>Antilopinae</taxon>
        <taxon>Nanger</taxon>
    </lineage>
</organism>
<feature type="chain" id="PRO_0000060995" description="Cytochrome b">
    <location>
        <begin position="1"/>
        <end position="379"/>
    </location>
</feature>
<feature type="transmembrane region" description="Helical" evidence="2">
    <location>
        <begin position="33"/>
        <end position="53"/>
    </location>
</feature>
<feature type="transmembrane region" description="Helical" evidence="2">
    <location>
        <begin position="77"/>
        <end position="98"/>
    </location>
</feature>
<feature type="transmembrane region" description="Helical" evidence="2">
    <location>
        <begin position="113"/>
        <end position="133"/>
    </location>
</feature>
<feature type="transmembrane region" description="Helical" evidence="2">
    <location>
        <begin position="178"/>
        <end position="198"/>
    </location>
</feature>
<feature type="transmembrane region" description="Helical" evidence="2">
    <location>
        <begin position="226"/>
        <end position="246"/>
    </location>
</feature>
<feature type="transmembrane region" description="Helical" evidence="2">
    <location>
        <begin position="288"/>
        <end position="308"/>
    </location>
</feature>
<feature type="transmembrane region" description="Helical" evidence="2">
    <location>
        <begin position="320"/>
        <end position="340"/>
    </location>
</feature>
<feature type="transmembrane region" description="Helical" evidence="2">
    <location>
        <begin position="347"/>
        <end position="367"/>
    </location>
</feature>
<feature type="binding site" description="axial binding residue" evidence="2">
    <location>
        <position position="83"/>
    </location>
    <ligand>
        <name>heme b</name>
        <dbReference type="ChEBI" id="CHEBI:60344"/>
        <label>b562</label>
    </ligand>
    <ligandPart>
        <name>Fe</name>
        <dbReference type="ChEBI" id="CHEBI:18248"/>
    </ligandPart>
</feature>
<feature type="binding site" description="axial binding residue" evidence="2">
    <location>
        <position position="97"/>
    </location>
    <ligand>
        <name>heme b</name>
        <dbReference type="ChEBI" id="CHEBI:60344"/>
        <label>b566</label>
    </ligand>
    <ligandPart>
        <name>Fe</name>
        <dbReference type="ChEBI" id="CHEBI:18248"/>
    </ligandPart>
</feature>
<feature type="binding site" description="axial binding residue" evidence="2">
    <location>
        <position position="182"/>
    </location>
    <ligand>
        <name>heme b</name>
        <dbReference type="ChEBI" id="CHEBI:60344"/>
        <label>b562</label>
    </ligand>
    <ligandPart>
        <name>Fe</name>
        <dbReference type="ChEBI" id="CHEBI:18248"/>
    </ligandPart>
</feature>
<feature type="binding site" description="axial binding residue" evidence="2">
    <location>
        <position position="196"/>
    </location>
    <ligand>
        <name>heme b</name>
        <dbReference type="ChEBI" id="CHEBI:60344"/>
        <label>b566</label>
    </ligand>
    <ligandPart>
        <name>Fe</name>
        <dbReference type="ChEBI" id="CHEBI:18248"/>
    </ligandPart>
</feature>
<feature type="binding site" evidence="2">
    <location>
        <position position="201"/>
    </location>
    <ligand>
        <name>a ubiquinone</name>
        <dbReference type="ChEBI" id="CHEBI:16389"/>
    </ligand>
</feature>
<reference key="1">
    <citation type="journal article" date="1999" name="J. Mammal. Evol.">
        <title>Molecular systematics of the subfamily Caprinae (Artiodactyla, Bovidae) as determined from cytochrome b sequences.</title>
        <authorList>
            <person name="Hassanin A."/>
            <person name="Pasquet E."/>
            <person name="Vigne J.-D."/>
        </authorList>
    </citation>
    <scope>NUCLEOTIDE SEQUENCE [GENOMIC DNA]</scope>
</reference>
<evidence type="ECO:0000250" key="1"/>
<evidence type="ECO:0000250" key="2">
    <source>
        <dbReference type="UniProtKB" id="P00157"/>
    </source>
</evidence>
<evidence type="ECO:0000255" key="3">
    <source>
        <dbReference type="PROSITE-ProRule" id="PRU00967"/>
    </source>
</evidence>
<evidence type="ECO:0000255" key="4">
    <source>
        <dbReference type="PROSITE-ProRule" id="PRU00968"/>
    </source>
</evidence>
<comment type="function">
    <text evidence="2">Component of the ubiquinol-cytochrome c reductase complex (complex III or cytochrome b-c1 complex) that is part of the mitochondrial respiratory chain. The b-c1 complex mediates electron transfer from ubiquinol to cytochrome c. Contributes to the generation of a proton gradient across the mitochondrial membrane that is then used for ATP synthesis.</text>
</comment>
<comment type="cofactor">
    <cofactor evidence="2">
        <name>heme b</name>
        <dbReference type="ChEBI" id="CHEBI:60344"/>
    </cofactor>
    <text evidence="2">Binds 2 heme b groups non-covalently.</text>
</comment>
<comment type="subunit">
    <text evidence="2">The cytochrome bc1 complex contains 11 subunits: 3 respiratory subunits (MT-CYB, CYC1 and UQCRFS1), 2 core proteins (UQCRC1 and UQCRC2) and 6 low-molecular weight proteins (UQCRH/QCR6, UQCRB/QCR7, UQCRQ/QCR8, UQCR10/QCR9, UQCR11/QCR10 and a cleavage product of UQCRFS1). This cytochrome bc1 complex then forms a dimer.</text>
</comment>
<comment type="subcellular location">
    <subcellularLocation>
        <location evidence="2">Mitochondrion inner membrane</location>
        <topology evidence="2">Multi-pass membrane protein</topology>
    </subcellularLocation>
</comment>
<comment type="miscellaneous">
    <text evidence="1">Heme 1 (or BL or b562) is low-potential and absorbs at about 562 nm, and heme 2 (or BH or b566) is high-potential and absorbs at about 566 nm.</text>
</comment>
<comment type="similarity">
    <text evidence="3 4">Belongs to the cytochrome b family.</text>
</comment>
<comment type="caution">
    <text evidence="2">The full-length protein contains only eight transmembrane helices, not nine as predicted by bioinformatics tools.</text>
</comment>
<keyword id="KW-0249">Electron transport</keyword>
<keyword id="KW-0349">Heme</keyword>
<keyword id="KW-0408">Iron</keyword>
<keyword id="KW-0472">Membrane</keyword>
<keyword id="KW-0479">Metal-binding</keyword>
<keyword id="KW-0496">Mitochondrion</keyword>
<keyword id="KW-0999">Mitochondrion inner membrane</keyword>
<keyword id="KW-0679">Respiratory chain</keyword>
<keyword id="KW-0812">Transmembrane</keyword>
<keyword id="KW-1133">Transmembrane helix</keyword>
<keyword id="KW-0813">Transport</keyword>
<keyword id="KW-0830">Ubiquinone</keyword>
<sequence>MINTRKSHPLMKIVNNAFIDLPAPSNISSWWNFGSLLGICLILQILTGLFLAMHYTADTATAFSSVTHICRDVNYGWIIRYMHANGASMFFICLFMHVGRGLYYGSYTFLETWNVGVILLFATMATAFMGYVLPWGQMSFWGATVITNLLSAIPYIGTNLVEWIWGGFSVDKATLTRFFAFHFILPFIIAALAMVHLLFLHETGSNNPTGISSDADKIPFHPYYTIKDILGALLLILALMLLVLFTPDLLGDPDNYTPANPLNTPPHIKPEWYFLFAYAILRSIPNKLGGVLALVLSILILVLMPLLHTSKQRSMMFRPLSQCLFWLLVADLLTXTWIGGQPVEHPYIIIGQLASITYFLLILVLMPVASTIENKLLKW</sequence>
<gene>
    <name type="primary">MT-CYB</name>
    <name type="synonym">COB</name>
    <name type="synonym">CYTB</name>
    <name type="synonym">MTCYB</name>
</gene>
<accession>O78774</accession>
<name>CYB_NANGR</name>
<dbReference type="EMBL" id="AF034723">
    <property type="protein sequence ID" value="AAC31678.1"/>
    <property type="molecule type" value="Genomic_DNA"/>
</dbReference>
<dbReference type="RefSeq" id="YP_007626393.1">
    <property type="nucleotide sequence ID" value="NC_020725.1"/>
</dbReference>
<dbReference type="GeneID" id="14842279"/>
<dbReference type="CTD" id="4519"/>
<dbReference type="GO" id="GO:0005743">
    <property type="term" value="C:mitochondrial inner membrane"/>
    <property type="evidence" value="ECO:0007669"/>
    <property type="project" value="UniProtKB-SubCell"/>
</dbReference>
<dbReference type="GO" id="GO:0045275">
    <property type="term" value="C:respiratory chain complex III"/>
    <property type="evidence" value="ECO:0007669"/>
    <property type="project" value="InterPro"/>
</dbReference>
<dbReference type="GO" id="GO:0046872">
    <property type="term" value="F:metal ion binding"/>
    <property type="evidence" value="ECO:0007669"/>
    <property type="project" value="UniProtKB-KW"/>
</dbReference>
<dbReference type="GO" id="GO:0008121">
    <property type="term" value="F:ubiquinol-cytochrome-c reductase activity"/>
    <property type="evidence" value="ECO:0007669"/>
    <property type="project" value="InterPro"/>
</dbReference>
<dbReference type="GO" id="GO:0006122">
    <property type="term" value="P:mitochondrial electron transport, ubiquinol to cytochrome c"/>
    <property type="evidence" value="ECO:0007669"/>
    <property type="project" value="TreeGrafter"/>
</dbReference>
<dbReference type="CDD" id="cd00290">
    <property type="entry name" value="cytochrome_b_C"/>
    <property type="match status" value="1"/>
</dbReference>
<dbReference type="CDD" id="cd00284">
    <property type="entry name" value="Cytochrome_b_N"/>
    <property type="match status" value="1"/>
</dbReference>
<dbReference type="FunFam" id="1.20.810.10:FF:000002">
    <property type="entry name" value="Cytochrome b"/>
    <property type="match status" value="1"/>
</dbReference>
<dbReference type="Gene3D" id="1.20.810.10">
    <property type="entry name" value="Cytochrome Bc1 Complex, Chain C"/>
    <property type="match status" value="1"/>
</dbReference>
<dbReference type="InterPro" id="IPR005798">
    <property type="entry name" value="Cyt_b/b6_C"/>
</dbReference>
<dbReference type="InterPro" id="IPR036150">
    <property type="entry name" value="Cyt_b/b6_C_sf"/>
</dbReference>
<dbReference type="InterPro" id="IPR005797">
    <property type="entry name" value="Cyt_b/b6_N"/>
</dbReference>
<dbReference type="InterPro" id="IPR027387">
    <property type="entry name" value="Cytb/b6-like_sf"/>
</dbReference>
<dbReference type="InterPro" id="IPR030689">
    <property type="entry name" value="Cytochrome_b"/>
</dbReference>
<dbReference type="InterPro" id="IPR048260">
    <property type="entry name" value="Cytochrome_b_C_euk/bac"/>
</dbReference>
<dbReference type="InterPro" id="IPR048259">
    <property type="entry name" value="Cytochrome_b_N_euk/bac"/>
</dbReference>
<dbReference type="InterPro" id="IPR016174">
    <property type="entry name" value="Di-haem_cyt_TM"/>
</dbReference>
<dbReference type="PANTHER" id="PTHR19271">
    <property type="entry name" value="CYTOCHROME B"/>
    <property type="match status" value="1"/>
</dbReference>
<dbReference type="PANTHER" id="PTHR19271:SF16">
    <property type="entry name" value="CYTOCHROME B"/>
    <property type="match status" value="1"/>
</dbReference>
<dbReference type="Pfam" id="PF00032">
    <property type="entry name" value="Cytochrom_B_C"/>
    <property type="match status" value="1"/>
</dbReference>
<dbReference type="Pfam" id="PF00033">
    <property type="entry name" value="Cytochrome_B"/>
    <property type="match status" value="1"/>
</dbReference>
<dbReference type="PIRSF" id="PIRSF038885">
    <property type="entry name" value="COB"/>
    <property type="match status" value="1"/>
</dbReference>
<dbReference type="SUPFAM" id="SSF81648">
    <property type="entry name" value="a domain/subunit of cytochrome bc1 complex (Ubiquinol-cytochrome c reductase)"/>
    <property type="match status" value="1"/>
</dbReference>
<dbReference type="SUPFAM" id="SSF81342">
    <property type="entry name" value="Transmembrane di-heme cytochromes"/>
    <property type="match status" value="1"/>
</dbReference>
<dbReference type="PROSITE" id="PS51003">
    <property type="entry name" value="CYTB_CTER"/>
    <property type="match status" value="1"/>
</dbReference>
<dbReference type="PROSITE" id="PS51002">
    <property type="entry name" value="CYTB_NTER"/>
    <property type="match status" value="1"/>
</dbReference>
<proteinExistence type="inferred from homology"/>
<protein>
    <recommendedName>
        <fullName>Cytochrome b</fullName>
    </recommendedName>
    <alternativeName>
        <fullName>Complex III subunit 3</fullName>
    </alternativeName>
    <alternativeName>
        <fullName>Complex III subunit III</fullName>
    </alternativeName>
    <alternativeName>
        <fullName>Cytochrome b-c1 complex subunit 3</fullName>
    </alternativeName>
    <alternativeName>
        <fullName>Ubiquinol-cytochrome-c reductase complex cytochrome b subunit</fullName>
    </alternativeName>
</protein>
<geneLocation type="mitochondrion"/>